<comment type="function">
    <text evidence="1">CRISPR (clustered regularly interspaced short palindromic repeat), is an adaptive immune system that provides protection against mobile genetic elements (viruses, transposable elements and conjugative plasmids). CRISPR clusters contain spacers, sequences complementary to antecedent mobile elements, and target invading nucleic acids. CRISPR clusters are transcribed and processed into CRISPR RNA (crRNA). Acts as a dsDNA endonuclease. Involved in the integration of spacer DNA into the CRISPR cassette.</text>
</comment>
<comment type="cofactor">
    <cofactor evidence="1">
        <name>Mg(2+)</name>
        <dbReference type="ChEBI" id="CHEBI:18420"/>
    </cofactor>
    <cofactor evidence="1">
        <name>Mn(2+)</name>
        <dbReference type="ChEBI" id="CHEBI:29035"/>
    </cofactor>
</comment>
<comment type="subunit">
    <text evidence="1">Homodimer, forms a heterotetramer with a Cas2 homodimer.</text>
</comment>
<comment type="similarity">
    <text evidence="1">Belongs to the CRISPR-associated endonuclease Cas1 family.</text>
</comment>
<gene>
    <name evidence="1" type="primary">cas1-4</name>
    <name type="ordered locus">Mhun_1858</name>
</gene>
<accession>Q2FQQ2</accession>
<organism>
    <name type="scientific">Methanospirillum hungatei JF-1 (strain ATCC 27890 / DSM 864 / NBRC 100397 / JF-1)</name>
    <dbReference type="NCBI Taxonomy" id="323259"/>
    <lineage>
        <taxon>Archaea</taxon>
        <taxon>Methanobacteriati</taxon>
        <taxon>Methanobacteriota</taxon>
        <taxon>Stenosarchaea group</taxon>
        <taxon>Methanomicrobia</taxon>
        <taxon>Methanomicrobiales</taxon>
        <taxon>Methanospirillaceae</taxon>
        <taxon>Methanospirillum</taxon>
    </lineage>
</organism>
<feature type="chain" id="PRO_0000417104" description="CRISPR-associated endonuclease Cas1 4">
    <location>
        <begin position="1"/>
        <end position="347"/>
    </location>
</feature>
<feature type="region of interest" description="Disordered" evidence="2">
    <location>
        <begin position="1"/>
        <end position="25"/>
    </location>
</feature>
<feature type="compositionally biased region" description="Basic and acidic residues" evidence="2">
    <location>
        <begin position="1"/>
        <end position="21"/>
    </location>
</feature>
<feature type="binding site" evidence="1">
    <location>
        <position position="176"/>
    </location>
    <ligand>
        <name>Mn(2+)</name>
        <dbReference type="ChEBI" id="CHEBI:29035"/>
    </ligand>
</feature>
<feature type="binding site" evidence="1">
    <location>
        <position position="241"/>
    </location>
    <ligand>
        <name>Mn(2+)</name>
        <dbReference type="ChEBI" id="CHEBI:29035"/>
    </ligand>
</feature>
<feature type="binding site" evidence="1">
    <location>
        <position position="256"/>
    </location>
    <ligand>
        <name>Mn(2+)</name>
        <dbReference type="ChEBI" id="CHEBI:29035"/>
    </ligand>
</feature>
<name>CAS1D_METHJ</name>
<proteinExistence type="inferred from homology"/>
<sequence>MNIENEVHIENASESKREPKPPEGLLEDDTIYITTPYGKISLDGGRIQVKDSDGEIVASFPLEKVCTMNVFGSASVSTPLLKHCSDKEVVINYFTNFGKYFGSFVPSRNTIALVRRHQAGITKEKSLAICREIIHAKLQNSCVFLARKRVEVPSLLKELRDRSLHAVSVDSLRGIEGEAASIYFPMLSSSLPDEWRSDKRTRRPPRDELNALLSLTYTMVNTEVISALRQYNLDPFIGVMHVDRHGKPALALDLLEEFRPVFCDAFVARLINKRMITKDDFTQGSRLNDTAFKKYLGFYHDFMEESLKHPRFKYSVSRKKAIQIQAIIFRKAICGELKGYYPFIYAR</sequence>
<protein>
    <recommendedName>
        <fullName evidence="1">CRISPR-associated endonuclease Cas1 4</fullName>
        <ecNumber evidence="1">3.1.-.-</ecNumber>
    </recommendedName>
</protein>
<dbReference type="EC" id="3.1.-.-" evidence="1"/>
<dbReference type="EMBL" id="CP000254">
    <property type="protein sequence ID" value="ABD41575.1"/>
    <property type="molecule type" value="Genomic_DNA"/>
</dbReference>
<dbReference type="RefSeq" id="WP_011448839.1">
    <property type="nucleotide sequence ID" value="NC_007796.1"/>
</dbReference>
<dbReference type="SMR" id="Q2FQQ2"/>
<dbReference type="STRING" id="323259.Mhun_1858"/>
<dbReference type="EnsemblBacteria" id="ABD41575">
    <property type="protein sequence ID" value="ABD41575"/>
    <property type="gene ID" value="Mhun_1858"/>
</dbReference>
<dbReference type="GeneID" id="3922652"/>
<dbReference type="KEGG" id="mhu:Mhun_1858"/>
<dbReference type="eggNOG" id="arCOG01452">
    <property type="taxonomic scope" value="Archaea"/>
</dbReference>
<dbReference type="HOGENOM" id="CLU_052779_1_0_2"/>
<dbReference type="InParanoid" id="Q2FQQ2"/>
<dbReference type="OrthoDB" id="2216at2157"/>
<dbReference type="Proteomes" id="UP000001941">
    <property type="component" value="Chromosome"/>
</dbReference>
<dbReference type="GO" id="GO:0003677">
    <property type="term" value="F:DNA binding"/>
    <property type="evidence" value="ECO:0007669"/>
    <property type="project" value="UniProtKB-KW"/>
</dbReference>
<dbReference type="GO" id="GO:0004520">
    <property type="term" value="F:DNA endonuclease activity"/>
    <property type="evidence" value="ECO:0007669"/>
    <property type="project" value="InterPro"/>
</dbReference>
<dbReference type="GO" id="GO:0046872">
    <property type="term" value="F:metal ion binding"/>
    <property type="evidence" value="ECO:0007669"/>
    <property type="project" value="UniProtKB-UniRule"/>
</dbReference>
<dbReference type="GO" id="GO:0051607">
    <property type="term" value="P:defense response to virus"/>
    <property type="evidence" value="ECO:0007669"/>
    <property type="project" value="UniProtKB-UniRule"/>
</dbReference>
<dbReference type="GO" id="GO:0043571">
    <property type="term" value="P:maintenance of CRISPR repeat elements"/>
    <property type="evidence" value="ECO:0007669"/>
    <property type="project" value="UniProtKB-UniRule"/>
</dbReference>
<dbReference type="CDD" id="cd09634">
    <property type="entry name" value="Cas1_I-II-III"/>
    <property type="match status" value="1"/>
</dbReference>
<dbReference type="Gene3D" id="1.20.120.920">
    <property type="entry name" value="CRISPR-associated endonuclease Cas1, C-terminal domain"/>
    <property type="match status" value="1"/>
</dbReference>
<dbReference type="Gene3D" id="3.100.10.20">
    <property type="entry name" value="CRISPR-associated endonuclease Cas1, N-terminal domain"/>
    <property type="match status" value="1"/>
</dbReference>
<dbReference type="HAMAP" id="MF_01470">
    <property type="entry name" value="Cas1"/>
    <property type="match status" value="1"/>
</dbReference>
<dbReference type="InterPro" id="IPR050646">
    <property type="entry name" value="Cas1"/>
</dbReference>
<dbReference type="InterPro" id="IPR002729">
    <property type="entry name" value="CRISPR-assoc_Cas1"/>
</dbReference>
<dbReference type="InterPro" id="IPR042206">
    <property type="entry name" value="CRISPR-assoc_Cas1_C"/>
</dbReference>
<dbReference type="InterPro" id="IPR023843">
    <property type="entry name" value="CRISPR-assoc_Cas1_cyanobact"/>
</dbReference>
<dbReference type="InterPro" id="IPR042211">
    <property type="entry name" value="CRISPR-assoc_Cas1_N"/>
</dbReference>
<dbReference type="NCBIfam" id="TIGR00287">
    <property type="entry name" value="cas1"/>
    <property type="match status" value="1"/>
</dbReference>
<dbReference type="NCBIfam" id="TIGR04093">
    <property type="entry name" value="cas1_CYANO"/>
    <property type="match status" value="1"/>
</dbReference>
<dbReference type="PANTHER" id="PTHR34353">
    <property type="entry name" value="CRISPR-ASSOCIATED ENDONUCLEASE CAS1 1"/>
    <property type="match status" value="1"/>
</dbReference>
<dbReference type="PANTHER" id="PTHR34353:SF2">
    <property type="entry name" value="CRISPR-ASSOCIATED ENDONUCLEASE CAS1 1"/>
    <property type="match status" value="1"/>
</dbReference>
<dbReference type="Pfam" id="PF01867">
    <property type="entry name" value="Cas_Cas1"/>
    <property type="match status" value="1"/>
</dbReference>
<keyword id="KW-0051">Antiviral defense</keyword>
<keyword id="KW-0238">DNA-binding</keyword>
<keyword id="KW-0255">Endonuclease</keyword>
<keyword id="KW-0378">Hydrolase</keyword>
<keyword id="KW-0460">Magnesium</keyword>
<keyword id="KW-0464">Manganese</keyword>
<keyword id="KW-0479">Metal-binding</keyword>
<keyword id="KW-0540">Nuclease</keyword>
<keyword id="KW-1185">Reference proteome</keyword>
<evidence type="ECO:0000255" key="1">
    <source>
        <dbReference type="HAMAP-Rule" id="MF_01470"/>
    </source>
</evidence>
<evidence type="ECO:0000256" key="2">
    <source>
        <dbReference type="SAM" id="MobiDB-lite"/>
    </source>
</evidence>
<reference key="1">
    <citation type="journal article" date="2016" name="Stand. Genomic Sci.">
        <title>Complete genome sequence of Methanospirillum hungatei type strain JF1.</title>
        <authorList>
            <person name="Gunsalus R.P."/>
            <person name="Cook L.E."/>
            <person name="Crable B."/>
            <person name="Rohlin L."/>
            <person name="McDonald E."/>
            <person name="Mouttaki H."/>
            <person name="Sieber J.R."/>
            <person name="Poweleit N."/>
            <person name="Zhou H."/>
            <person name="Lapidus A.L."/>
            <person name="Daligault H.E."/>
            <person name="Land M."/>
            <person name="Gilna P."/>
            <person name="Ivanova N."/>
            <person name="Kyrpides N."/>
            <person name="Culley D.E."/>
            <person name="McInerney M.J."/>
        </authorList>
    </citation>
    <scope>NUCLEOTIDE SEQUENCE [LARGE SCALE GENOMIC DNA]</scope>
    <source>
        <strain>ATCC 27890 / DSM 864 / NBRC 100397 / JF-1</strain>
    </source>
</reference>